<dbReference type="EMBL" id="M81703">
    <property type="protein sequence ID" value="AAA26739.1"/>
    <property type="molecule type" value="Genomic_DNA"/>
</dbReference>
<dbReference type="EMBL" id="M89476">
    <property type="protein sequence ID" value="AAA26804.1"/>
    <property type="status" value="ALT_INIT"/>
    <property type="molecule type" value="Genomic_DNA"/>
</dbReference>
<dbReference type="PIR" id="A48990">
    <property type="entry name" value="A48990"/>
</dbReference>
<dbReference type="PIR" id="JH0572">
    <property type="entry name" value="JH0572"/>
</dbReference>
<dbReference type="SMR" id="P43161"/>
<dbReference type="GO" id="GO:0032993">
    <property type="term" value="C:protein-DNA complex"/>
    <property type="evidence" value="ECO:0007669"/>
    <property type="project" value="TreeGrafter"/>
</dbReference>
<dbReference type="GO" id="GO:0003677">
    <property type="term" value="F:DNA binding"/>
    <property type="evidence" value="ECO:0007669"/>
    <property type="project" value="UniProtKB-KW"/>
</dbReference>
<dbReference type="GO" id="GO:0003700">
    <property type="term" value="F:DNA-binding transcription factor activity"/>
    <property type="evidence" value="ECO:0007669"/>
    <property type="project" value="InterPro"/>
</dbReference>
<dbReference type="CDD" id="cd08414">
    <property type="entry name" value="PBP2_LTTR_aromatics_like"/>
    <property type="match status" value="1"/>
</dbReference>
<dbReference type="Gene3D" id="3.40.190.10">
    <property type="entry name" value="Periplasmic binding protein-like II"/>
    <property type="match status" value="2"/>
</dbReference>
<dbReference type="Gene3D" id="1.10.10.10">
    <property type="entry name" value="Winged helix-like DNA-binding domain superfamily/Winged helix DNA-binding domain"/>
    <property type="match status" value="1"/>
</dbReference>
<dbReference type="InterPro" id="IPR005119">
    <property type="entry name" value="LysR_subst-bd"/>
</dbReference>
<dbReference type="InterPro" id="IPR000847">
    <property type="entry name" value="Tscrpt_reg_HTH_LysR"/>
</dbReference>
<dbReference type="InterPro" id="IPR036388">
    <property type="entry name" value="WH-like_DNA-bd_sf"/>
</dbReference>
<dbReference type="InterPro" id="IPR036390">
    <property type="entry name" value="WH_DNA-bd_sf"/>
</dbReference>
<dbReference type="PANTHER" id="PTHR30346:SF30">
    <property type="entry name" value="SMALL NEUTRAL PROTEASE REGULATORY PROTEIN"/>
    <property type="match status" value="1"/>
</dbReference>
<dbReference type="PANTHER" id="PTHR30346">
    <property type="entry name" value="TRANSCRIPTIONAL DUAL REGULATOR HCAR-RELATED"/>
    <property type="match status" value="1"/>
</dbReference>
<dbReference type="Pfam" id="PF00126">
    <property type="entry name" value="HTH_1"/>
    <property type="match status" value="1"/>
</dbReference>
<dbReference type="Pfam" id="PF03466">
    <property type="entry name" value="LysR_substrate"/>
    <property type="match status" value="1"/>
</dbReference>
<dbReference type="PRINTS" id="PR00039">
    <property type="entry name" value="HTHLYSR"/>
</dbReference>
<dbReference type="SUPFAM" id="SSF53850">
    <property type="entry name" value="Periplasmic binding protein-like II"/>
    <property type="match status" value="1"/>
</dbReference>
<dbReference type="SUPFAM" id="SSF46785">
    <property type="entry name" value="Winged helix' DNA-binding domain"/>
    <property type="match status" value="1"/>
</dbReference>
<dbReference type="PROSITE" id="PS50931">
    <property type="entry name" value="HTH_LYSR"/>
    <property type="match status" value="1"/>
</dbReference>
<comment type="function">
    <text>Transcriptional activator of the gene (snpA) for the small neutral protease.</text>
</comment>
<comment type="similarity">
    <text evidence="3">Belongs to the LysR transcriptional regulatory family.</text>
</comment>
<comment type="sequence caution" evidence="3">
    <conflict type="erroneous initiation">
        <sequence resource="EMBL-CDS" id="AAA26804"/>
    </conflict>
</comment>
<evidence type="ECO:0000255" key="1">
    <source>
        <dbReference type="PROSITE-ProRule" id="PRU00253"/>
    </source>
</evidence>
<evidence type="ECO:0000256" key="2">
    <source>
        <dbReference type="SAM" id="MobiDB-lite"/>
    </source>
</evidence>
<evidence type="ECO:0000305" key="3"/>
<feature type="chain" id="PRO_0000105685" description="Small neutral protease regulatory protein">
    <location>
        <begin position="1"/>
        <end position="344"/>
    </location>
</feature>
<feature type="domain" description="HTH lysR-type" evidence="1">
    <location>
        <begin position="1"/>
        <end position="60"/>
    </location>
</feature>
<feature type="DNA-binding region" description="H-T-H motif" evidence="1">
    <location>
        <begin position="20"/>
        <end position="39"/>
    </location>
</feature>
<feature type="region of interest" description="Disordered" evidence="2">
    <location>
        <begin position="322"/>
        <end position="344"/>
    </location>
</feature>
<feature type="compositionally biased region" description="Basic and acidic residues" evidence="2">
    <location>
        <begin position="327"/>
        <end position="338"/>
    </location>
</feature>
<feature type="sequence conflict" description="In Ref. 2; AAA26804." evidence="3" ref="2">
    <original>G</original>
    <variation>AR</variation>
    <location>
        <position position="270"/>
    </location>
</feature>
<sequence length="344" mass="37416">MELEVRHLRALCAIADAGSLHRAARRLGVAQPTLSTQLTRIEQALGGPLFTRERTGCRPTPLGRTVLGRARPLLTDMNTLVREARAAAAGGDSRLRVGSTASRALAGWLRRLRRPGLEPTLQMDVSANALLRRVTDGQLDVAFVHEVEGCALHIPEDLRLRVLVEREPQFVMLPADHPAAARPVVRLADLADDRWMVDPTVDGEWDGVHRMLRAVGLNPRVLHGDYHTAASLVATGEVVTVCQPSSQSRPDTAVRRLYGDPLGVRLLLAGTRAELDAVFPALEDAYWEAARQSTAYREWLEGGGIRTLPRCPVAATGGGRVSCGRAEGSRSRRPRDVAPPRPIG</sequence>
<proteinExistence type="inferred from homology"/>
<name>MPRR_STRLI</name>
<reference key="1">
    <citation type="journal article" date="1992" name="Can. J. Microbiol.">
        <title>Cloning of genetic loci involved in endoprotease activity in Streptomyces lividans 66: a novel neutral protease gene with an adjacent divergent putative regulatory gene.</title>
        <authorList>
            <person name="Butler M.J."/>
            <person name="Davey C.C."/>
            <person name="Krygsman P."/>
            <person name="Walczyk E."/>
            <person name="Malek L.T."/>
        </authorList>
    </citation>
    <scope>NUCLEOTIDE SEQUENCE [GENOMIC DNA]</scope>
    <source>
        <strain>66 / 1326</strain>
    </source>
</reference>
<reference key="2">
    <citation type="journal article" date="1992" name="Gene">
        <title>Cloning and characterization of a gene encoding extracellular metalloprotease from Streptomyces lividans.</title>
        <authorList>
            <person name="Lichenstein H.S."/>
            <person name="Busse L.A."/>
            <person name="Smith G.A."/>
            <person name="Narhi L.O."/>
            <person name="McGinley M.O."/>
            <person name="Rohde M.F."/>
            <person name="Katzowitz J.L."/>
            <person name="Zukowski M.M."/>
        </authorList>
    </citation>
    <scope>NUCLEOTIDE SEQUENCE [GENOMIC DNA] OF 1-305</scope>
    <source>
        <strain>TK24</strain>
    </source>
</reference>
<keyword id="KW-0010">Activator</keyword>
<keyword id="KW-0238">DNA-binding</keyword>
<keyword id="KW-0804">Transcription</keyword>
<keyword id="KW-0805">Transcription regulation</keyword>
<organism>
    <name type="scientific">Streptomyces lividans</name>
    <dbReference type="NCBI Taxonomy" id="1916"/>
    <lineage>
        <taxon>Bacteria</taxon>
        <taxon>Bacillati</taxon>
        <taxon>Actinomycetota</taxon>
        <taxon>Actinomycetes</taxon>
        <taxon>Kitasatosporales</taxon>
        <taxon>Streptomycetaceae</taxon>
        <taxon>Streptomyces</taxon>
    </lineage>
</organism>
<protein>
    <recommendedName>
        <fullName>Small neutral protease regulatory protein</fullName>
    </recommendedName>
</protein>
<gene>
    <name type="primary">mprR</name>
    <name type="synonym">snpR</name>
</gene>
<accession>P43161</accession>